<organism>
    <name type="scientific">Aeromonas hydrophila</name>
    <dbReference type="NCBI Taxonomy" id="644"/>
    <lineage>
        <taxon>Bacteria</taxon>
        <taxon>Pseudomonadati</taxon>
        <taxon>Pseudomonadota</taxon>
        <taxon>Gammaproteobacteria</taxon>
        <taxon>Aeromonadales</taxon>
        <taxon>Aeromonadaceae</taxon>
        <taxon>Aeromonas</taxon>
    </lineage>
</organism>
<proteinExistence type="inferred from homology"/>
<comment type="function">
    <text evidence="1">The phosphoenolpyruvate-dependent sugar phosphotransferase system (sugar PTS), a major carbohydrate active transport system, catalyzes the phosphorylation of incoming sugar substrates concomitantly with their translocation across the cell membrane. The enzyme II CelABD PTS system is involved in cellobiose transport.</text>
</comment>
<comment type="catalytic activity">
    <reaction evidence="1 2">
        <text>D-cellobiose(out) + N(pros)-phospho-L-histidyl-[protein] = 6-phospho-beta-D-glucosyl-(1-&gt;4)-D-glucose(in) + L-histidyl-[protein]</text>
        <dbReference type="Rhea" id="RHEA:49292"/>
        <dbReference type="Rhea" id="RHEA-COMP:9745"/>
        <dbReference type="Rhea" id="RHEA-COMP:9746"/>
        <dbReference type="ChEBI" id="CHEBI:17057"/>
        <dbReference type="ChEBI" id="CHEBI:29979"/>
        <dbReference type="ChEBI" id="CHEBI:58312"/>
        <dbReference type="ChEBI" id="CHEBI:64837"/>
        <dbReference type="EC" id="2.7.1.205"/>
    </reaction>
</comment>
<comment type="subcellular location">
    <subcellularLocation>
        <location evidence="3">Cytoplasm</location>
    </subcellularLocation>
</comment>
<comment type="domain">
    <text evidence="2">The PTS EIIB type-3 domain is phosphorylated by phospho-EIIA on a cysteinyl residue. Then, it transfers the phosphoryl group to the sugar substrate concomitantly with the sugar uptake processed by the PTS EIIC type-3 domain.</text>
</comment>
<keyword id="KW-0963">Cytoplasm</keyword>
<keyword id="KW-0418">Kinase</keyword>
<keyword id="KW-0597">Phosphoprotein</keyword>
<keyword id="KW-0598">Phosphotransferase system</keyword>
<keyword id="KW-0762">Sugar transport</keyword>
<keyword id="KW-0808">Transferase</keyword>
<keyword id="KW-0813">Transport</keyword>
<dbReference type="EC" id="2.7.1.205" evidence="1 2"/>
<dbReference type="EMBL" id="X66504">
    <property type="status" value="NOT_ANNOTATED_CDS"/>
    <property type="molecule type" value="Genomic_DNA"/>
</dbReference>
<dbReference type="PIR" id="H49905">
    <property type="entry name" value="H49905"/>
</dbReference>
<dbReference type="SMR" id="P55901"/>
<dbReference type="GO" id="GO:0005737">
    <property type="term" value="C:cytoplasm"/>
    <property type="evidence" value="ECO:0007669"/>
    <property type="project" value="UniProtKB-SubCell"/>
</dbReference>
<dbReference type="GO" id="GO:0016301">
    <property type="term" value="F:kinase activity"/>
    <property type="evidence" value="ECO:0007669"/>
    <property type="project" value="UniProtKB-KW"/>
</dbReference>
<dbReference type="GO" id="GO:0008982">
    <property type="term" value="F:protein-N(PI)-phosphohistidine-sugar phosphotransferase activity"/>
    <property type="evidence" value="ECO:0007669"/>
    <property type="project" value="InterPro"/>
</dbReference>
<dbReference type="GO" id="GO:0009401">
    <property type="term" value="P:phosphoenolpyruvate-dependent sugar phosphotransferase system"/>
    <property type="evidence" value="ECO:0007669"/>
    <property type="project" value="UniProtKB-KW"/>
</dbReference>
<dbReference type="CDD" id="cd05564">
    <property type="entry name" value="PTS_IIB_chitobiose_lichenan"/>
    <property type="match status" value="1"/>
</dbReference>
<dbReference type="Gene3D" id="3.40.50.2300">
    <property type="match status" value="1"/>
</dbReference>
<dbReference type="InterPro" id="IPR036095">
    <property type="entry name" value="PTS_EIIB-like_sf"/>
</dbReference>
<dbReference type="InterPro" id="IPR003501">
    <property type="entry name" value="PTS_EIIB_2/3"/>
</dbReference>
<dbReference type="InterPro" id="IPR013012">
    <property type="entry name" value="PTS_EIIB_3"/>
</dbReference>
<dbReference type="InterPro" id="IPR051819">
    <property type="entry name" value="PTS_sugar-specific_EIIB"/>
</dbReference>
<dbReference type="NCBIfam" id="NF007796">
    <property type="entry name" value="PRK10499.1"/>
    <property type="match status" value="1"/>
</dbReference>
<dbReference type="NCBIfam" id="TIGR00853">
    <property type="entry name" value="pts-lac"/>
    <property type="match status" value="1"/>
</dbReference>
<dbReference type="PANTHER" id="PTHR34581">
    <property type="entry name" value="PTS SYSTEM N,N'-DIACETYLCHITOBIOSE-SPECIFIC EIIB COMPONENT"/>
    <property type="match status" value="1"/>
</dbReference>
<dbReference type="PANTHER" id="PTHR34581:SF2">
    <property type="entry name" value="PTS SYSTEM N,N'-DIACETYLCHITOBIOSE-SPECIFIC EIIB COMPONENT"/>
    <property type="match status" value="1"/>
</dbReference>
<dbReference type="Pfam" id="PF02302">
    <property type="entry name" value="PTS_IIB"/>
    <property type="match status" value="1"/>
</dbReference>
<dbReference type="SUPFAM" id="SSF52794">
    <property type="entry name" value="PTS system IIB component-like"/>
    <property type="match status" value="1"/>
</dbReference>
<dbReference type="PROSITE" id="PS51100">
    <property type="entry name" value="PTS_EIIB_TYPE_3"/>
    <property type="match status" value="1"/>
</dbReference>
<evidence type="ECO:0000250" key="1">
    <source>
        <dbReference type="UniProtKB" id="Q45399"/>
    </source>
</evidence>
<evidence type="ECO:0000255" key="2">
    <source>
        <dbReference type="PROSITE-ProRule" id="PRU00423"/>
    </source>
</evidence>
<evidence type="ECO:0000305" key="3"/>
<sequence length="88" mass="9716">MEKKRIYLFCSAGMSTSLLVSKMKAQAEKYDVPVLIDAYPETLAGEKGQDADLVLLGPQIAYMLPEIQQQLPGKPVEVIDTLLYGKVD</sequence>
<name>PTEB_AERHY</name>
<feature type="chain" id="PRO_0000186488" description="PTS system cellobiose-specific EIIB component">
    <location>
        <begin position="1"/>
        <end position="88" status="greater than"/>
    </location>
</feature>
<feature type="domain" description="PTS EIIB type-3" evidence="2">
    <location>
        <begin position="3"/>
        <end position="88" status="greater than"/>
    </location>
</feature>
<feature type="active site" description="Phosphocysteine intermediate" evidence="3">
    <location>
        <position position="10"/>
    </location>
</feature>
<feature type="modified residue" description="Phosphocysteine; by EIIA" evidence="2">
    <location>
        <position position="10"/>
    </location>
</feature>
<feature type="non-terminal residue">
    <location>
        <position position="88"/>
    </location>
</feature>
<gene>
    <name evidence="1" type="primary">celA</name>
</gene>
<accession>P55901</accession>
<protein>
    <recommendedName>
        <fullName evidence="1">PTS system cellobiose-specific EIIB component</fullName>
    </recommendedName>
    <alternativeName>
        <fullName evidence="1">Cellobiose-specific phosphotransferase enzyme IIB component</fullName>
        <ecNumber evidence="1 2">2.7.1.205</ecNumber>
    </alternativeName>
    <alternativeName>
        <fullName evidence="1">EIIB-Cel</fullName>
    </alternativeName>
</protein>
<reference key="1">
    <citation type="journal article" date="1993" name="J. Bacteriol.">
        <title>Isolation and analysis of eight exe genes and their involvement in extracellular protein secretion and outer membrane assembly in Aeromonas hydrophila.</title>
        <authorList>
            <person name="Howard S.P."/>
            <person name="Critch J."/>
            <person name="Bedi A."/>
        </authorList>
    </citation>
    <scope>NUCLEOTIDE SEQUENCE [GENOMIC DNA]</scope>
    <source>
        <strain>Ah65</strain>
    </source>
</reference>
<reference key="2">
    <citation type="journal article" date="1996" name="Genome Sci. Technol.">
        <title>Novel phosphotransferases system genes revealed by bacterial genome analysis: operons encoding homologues of sugar-specific permease domains of the phosphotransferase system and pentose catabolic enzymes.</title>
        <authorList>
            <person name="Reizer J."/>
            <person name="Charbit A."/>
            <person name="Reizer A."/>
            <person name="Saier M.H. Jr."/>
        </authorList>
    </citation>
    <scope>IDENTIFICATION</scope>
</reference>